<gene>
    <name evidence="1" type="primary">mnmA</name>
    <name type="ordered locus">Haur_0841</name>
</gene>
<dbReference type="EC" id="2.8.1.13" evidence="1"/>
<dbReference type="EMBL" id="CP000875">
    <property type="protein sequence ID" value="ABX03489.1"/>
    <property type="molecule type" value="Genomic_DNA"/>
</dbReference>
<dbReference type="SMR" id="A9AYA7"/>
<dbReference type="FunCoup" id="A9AYA7">
    <property type="interactions" value="495"/>
</dbReference>
<dbReference type="STRING" id="316274.Haur_0841"/>
<dbReference type="KEGG" id="hau:Haur_0841"/>
<dbReference type="eggNOG" id="COG0482">
    <property type="taxonomic scope" value="Bacteria"/>
</dbReference>
<dbReference type="HOGENOM" id="CLU_035188_0_0_0"/>
<dbReference type="InParanoid" id="A9AYA7"/>
<dbReference type="Proteomes" id="UP000000787">
    <property type="component" value="Chromosome"/>
</dbReference>
<dbReference type="GO" id="GO:0005737">
    <property type="term" value="C:cytoplasm"/>
    <property type="evidence" value="ECO:0007669"/>
    <property type="project" value="UniProtKB-SubCell"/>
</dbReference>
<dbReference type="GO" id="GO:0005524">
    <property type="term" value="F:ATP binding"/>
    <property type="evidence" value="ECO:0007669"/>
    <property type="project" value="UniProtKB-KW"/>
</dbReference>
<dbReference type="GO" id="GO:0000049">
    <property type="term" value="F:tRNA binding"/>
    <property type="evidence" value="ECO:0007669"/>
    <property type="project" value="UniProtKB-KW"/>
</dbReference>
<dbReference type="GO" id="GO:0103016">
    <property type="term" value="F:tRNA-uridine 2-sulfurtransferase activity"/>
    <property type="evidence" value="ECO:0007669"/>
    <property type="project" value="UniProtKB-EC"/>
</dbReference>
<dbReference type="GO" id="GO:0002143">
    <property type="term" value="P:tRNA wobble position uridine thiolation"/>
    <property type="evidence" value="ECO:0007669"/>
    <property type="project" value="TreeGrafter"/>
</dbReference>
<dbReference type="CDD" id="cd01998">
    <property type="entry name" value="MnmA_TRMU-like"/>
    <property type="match status" value="1"/>
</dbReference>
<dbReference type="FunFam" id="2.30.30.280:FF:000001">
    <property type="entry name" value="tRNA-specific 2-thiouridylase MnmA"/>
    <property type="match status" value="1"/>
</dbReference>
<dbReference type="FunFam" id="3.40.50.620:FF:000115">
    <property type="entry name" value="tRNA-specific 2-thiouridylase MnmA"/>
    <property type="match status" value="1"/>
</dbReference>
<dbReference type="Gene3D" id="2.30.30.280">
    <property type="entry name" value="Adenine nucleotide alpha hydrolases-like domains"/>
    <property type="match status" value="1"/>
</dbReference>
<dbReference type="Gene3D" id="3.40.50.620">
    <property type="entry name" value="HUPs"/>
    <property type="match status" value="1"/>
</dbReference>
<dbReference type="Gene3D" id="2.40.30.10">
    <property type="entry name" value="Translation factors"/>
    <property type="match status" value="1"/>
</dbReference>
<dbReference type="HAMAP" id="MF_00144">
    <property type="entry name" value="tRNA_thiouridyl_MnmA"/>
    <property type="match status" value="1"/>
</dbReference>
<dbReference type="InterPro" id="IPR004506">
    <property type="entry name" value="MnmA-like"/>
</dbReference>
<dbReference type="InterPro" id="IPR046885">
    <property type="entry name" value="MnmA-like_C"/>
</dbReference>
<dbReference type="InterPro" id="IPR046884">
    <property type="entry name" value="MnmA-like_central"/>
</dbReference>
<dbReference type="InterPro" id="IPR023382">
    <property type="entry name" value="MnmA-like_central_sf"/>
</dbReference>
<dbReference type="InterPro" id="IPR014729">
    <property type="entry name" value="Rossmann-like_a/b/a_fold"/>
</dbReference>
<dbReference type="NCBIfam" id="NF001138">
    <property type="entry name" value="PRK00143.1"/>
    <property type="match status" value="1"/>
</dbReference>
<dbReference type="NCBIfam" id="TIGR00420">
    <property type="entry name" value="trmU"/>
    <property type="match status" value="1"/>
</dbReference>
<dbReference type="PANTHER" id="PTHR11933:SF5">
    <property type="entry name" value="MITOCHONDRIAL TRNA-SPECIFIC 2-THIOURIDYLASE 1"/>
    <property type="match status" value="1"/>
</dbReference>
<dbReference type="PANTHER" id="PTHR11933">
    <property type="entry name" value="TRNA 5-METHYLAMINOMETHYL-2-THIOURIDYLATE -METHYLTRANSFERASE"/>
    <property type="match status" value="1"/>
</dbReference>
<dbReference type="Pfam" id="PF03054">
    <property type="entry name" value="tRNA_Me_trans"/>
    <property type="match status" value="1"/>
</dbReference>
<dbReference type="Pfam" id="PF20258">
    <property type="entry name" value="tRNA_Me_trans_C"/>
    <property type="match status" value="1"/>
</dbReference>
<dbReference type="Pfam" id="PF20259">
    <property type="entry name" value="tRNA_Me_trans_M"/>
    <property type="match status" value="1"/>
</dbReference>
<dbReference type="SUPFAM" id="SSF52402">
    <property type="entry name" value="Adenine nucleotide alpha hydrolases-like"/>
    <property type="match status" value="1"/>
</dbReference>
<reference key="1">
    <citation type="journal article" date="2011" name="Stand. Genomic Sci.">
        <title>Complete genome sequence of the filamentous gliding predatory bacterium Herpetosiphon aurantiacus type strain (114-95(T)).</title>
        <authorList>
            <person name="Kiss H."/>
            <person name="Nett M."/>
            <person name="Domin N."/>
            <person name="Martin K."/>
            <person name="Maresca J.A."/>
            <person name="Copeland A."/>
            <person name="Lapidus A."/>
            <person name="Lucas S."/>
            <person name="Berry K.W."/>
            <person name="Glavina Del Rio T."/>
            <person name="Dalin E."/>
            <person name="Tice H."/>
            <person name="Pitluck S."/>
            <person name="Richardson P."/>
            <person name="Bruce D."/>
            <person name="Goodwin L."/>
            <person name="Han C."/>
            <person name="Detter J.C."/>
            <person name="Schmutz J."/>
            <person name="Brettin T."/>
            <person name="Land M."/>
            <person name="Hauser L."/>
            <person name="Kyrpides N.C."/>
            <person name="Ivanova N."/>
            <person name="Goeker M."/>
            <person name="Woyke T."/>
            <person name="Klenk H.P."/>
            <person name="Bryant D.A."/>
        </authorList>
    </citation>
    <scope>NUCLEOTIDE SEQUENCE [LARGE SCALE GENOMIC DNA]</scope>
    <source>
        <strain>ATCC 23779 / DSM 785 / 114-95</strain>
    </source>
</reference>
<evidence type="ECO:0000255" key="1">
    <source>
        <dbReference type="HAMAP-Rule" id="MF_00144"/>
    </source>
</evidence>
<proteinExistence type="inferred from homology"/>
<accession>A9AYA7</accession>
<organism>
    <name type="scientific">Herpetosiphon aurantiacus (strain ATCC 23779 / DSM 785 / 114-95)</name>
    <dbReference type="NCBI Taxonomy" id="316274"/>
    <lineage>
        <taxon>Bacteria</taxon>
        <taxon>Bacillati</taxon>
        <taxon>Chloroflexota</taxon>
        <taxon>Chloroflexia</taxon>
        <taxon>Herpetosiphonales</taxon>
        <taxon>Herpetosiphonaceae</taxon>
        <taxon>Herpetosiphon</taxon>
    </lineage>
</organism>
<protein>
    <recommendedName>
        <fullName evidence="1">tRNA-specific 2-thiouridylase MnmA</fullName>
        <ecNumber evidence="1">2.8.1.13</ecNumber>
    </recommendedName>
</protein>
<comment type="function">
    <text evidence="1">Catalyzes the 2-thiolation of uridine at the wobble position (U34) of tRNA, leading to the formation of s(2)U34.</text>
</comment>
<comment type="catalytic activity">
    <reaction evidence="1">
        <text>S-sulfanyl-L-cysteinyl-[protein] + uridine(34) in tRNA + AH2 + ATP = 2-thiouridine(34) in tRNA + L-cysteinyl-[protein] + A + AMP + diphosphate + H(+)</text>
        <dbReference type="Rhea" id="RHEA:47032"/>
        <dbReference type="Rhea" id="RHEA-COMP:10131"/>
        <dbReference type="Rhea" id="RHEA-COMP:11726"/>
        <dbReference type="Rhea" id="RHEA-COMP:11727"/>
        <dbReference type="Rhea" id="RHEA-COMP:11728"/>
        <dbReference type="ChEBI" id="CHEBI:13193"/>
        <dbReference type="ChEBI" id="CHEBI:15378"/>
        <dbReference type="ChEBI" id="CHEBI:17499"/>
        <dbReference type="ChEBI" id="CHEBI:29950"/>
        <dbReference type="ChEBI" id="CHEBI:30616"/>
        <dbReference type="ChEBI" id="CHEBI:33019"/>
        <dbReference type="ChEBI" id="CHEBI:61963"/>
        <dbReference type="ChEBI" id="CHEBI:65315"/>
        <dbReference type="ChEBI" id="CHEBI:87170"/>
        <dbReference type="ChEBI" id="CHEBI:456215"/>
        <dbReference type="EC" id="2.8.1.13"/>
    </reaction>
</comment>
<comment type="subcellular location">
    <subcellularLocation>
        <location evidence="1">Cytoplasm</location>
    </subcellularLocation>
</comment>
<comment type="similarity">
    <text evidence="1">Belongs to the MnmA/TRMU family.</text>
</comment>
<name>MNMA_HERA2</name>
<keyword id="KW-0067">ATP-binding</keyword>
<keyword id="KW-0963">Cytoplasm</keyword>
<keyword id="KW-1015">Disulfide bond</keyword>
<keyword id="KW-0547">Nucleotide-binding</keyword>
<keyword id="KW-0694">RNA-binding</keyword>
<keyword id="KW-0808">Transferase</keyword>
<keyword id="KW-0819">tRNA processing</keyword>
<keyword id="KW-0820">tRNA-binding</keyword>
<feature type="chain" id="PRO_0000349663" description="tRNA-specific 2-thiouridylase MnmA">
    <location>
        <begin position="1"/>
        <end position="357"/>
    </location>
</feature>
<feature type="region of interest" description="Interaction with tRNA" evidence="1">
    <location>
        <begin position="148"/>
        <end position="150"/>
    </location>
</feature>
<feature type="active site" description="Nucleophile" evidence="1">
    <location>
        <position position="101"/>
    </location>
</feature>
<feature type="active site" description="Cysteine persulfide intermediate" evidence="1">
    <location>
        <position position="198"/>
    </location>
</feature>
<feature type="binding site" evidence="1">
    <location>
        <begin position="7"/>
        <end position="14"/>
    </location>
    <ligand>
        <name>ATP</name>
        <dbReference type="ChEBI" id="CHEBI:30616"/>
    </ligand>
</feature>
<feature type="binding site" evidence="1">
    <location>
        <position position="33"/>
    </location>
    <ligand>
        <name>ATP</name>
        <dbReference type="ChEBI" id="CHEBI:30616"/>
    </ligand>
</feature>
<feature type="binding site" evidence="1">
    <location>
        <position position="125"/>
    </location>
    <ligand>
        <name>ATP</name>
        <dbReference type="ChEBI" id="CHEBI:30616"/>
    </ligand>
</feature>
<feature type="site" description="Interaction with tRNA" evidence="1">
    <location>
        <position position="126"/>
    </location>
</feature>
<feature type="site" description="Interaction with tRNA" evidence="1">
    <location>
        <position position="335"/>
    </location>
</feature>
<feature type="disulfide bond" description="Alternate" evidence="1">
    <location>
        <begin position="101"/>
        <end position="198"/>
    </location>
</feature>
<sequence>MAKIMVAMSGGVDSSLTAVLLKEQGHDVTGVTMHLWEGDDNGIMESQCCSVEMTAGARRVCAQYDIPYYVFNYQKDFRKHVIDYFLREYSSGATPNPCLACNRDLKFRVLLERAELLGFDGLATGHFVQITGGGEQPYDLRRGIDINKDQSYVLYMLSQRELGRLHFPLGGFTKPQVRQMARERGLVTADKPESMDICFIPDNNYRRFLNEERPEIMQPGPIVNRHGTVLGQHKGLPQYTIGQRKGLGIAAGSPLFVIEIDTVRNLLIVGDADELERRDFVIDDVRSVYGQIEAGIYAVQIRAHGEAVPATITPREDGTLHIRYDQPQRSVTPGQAAVLYRDDRVFGGGRISTERYS</sequence>